<sequence>MSSIFGKLREFVGFGEPTGYDYDYDEMEGDDYQGLYPAEPAQSLPTRSEEPHPRPSEPEMRSPVNTSAVTSTAMNPPMNQSMNNVVGMPGSGKWWGAVAEVIVMEPRSFEEMPQVIQALRERKSVVLNLTMMEPDQAQRAVDFVAGATYTIDGHQERIGESIFLFTPSCVQVSTQAGGQSHTLRDIPQAQIHTRPPAPAWTAEPLSRIAQ</sequence>
<gene>
    <name evidence="1" type="primary">sepF</name>
    <name type="ordered locus">Cyan7425_1471</name>
</gene>
<proteinExistence type="inferred from homology"/>
<name>SEPF_CYAP4</name>
<protein>
    <recommendedName>
        <fullName evidence="1">Cell division protein SepF</fullName>
    </recommendedName>
</protein>
<comment type="function">
    <text evidence="1">Cell division protein that is part of the divisome complex and is recruited early to the Z-ring. Probably stimulates Z-ring formation, perhaps through the cross-linking of FtsZ protofilaments. Its function overlaps with FtsA.</text>
</comment>
<comment type="subunit">
    <text evidence="1">Homodimer. Interacts with FtsZ.</text>
</comment>
<comment type="subcellular location">
    <subcellularLocation>
        <location evidence="1">Cytoplasm</location>
    </subcellularLocation>
    <text evidence="1">Localizes to the division site, in a FtsZ-dependent manner.</text>
</comment>
<comment type="similarity">
    <text evidence="1">Belongs to the SepF family.</text>
</comment>
<keyword id="KW-0131">Cell cycle</keyword>
<keyword id="KW-0132">Cell division</keyword>
<keyword id="KW-0963">Cytoplasm</keyword>
<keyword id="KW-0717">Septation</keyword>
<accession>B8HPI0</accession>
<feature type="chain" id="PRO_1000164534" description="Cell division protein SepF">
    <location>
        <begin position="1"/>
        <end position="210"/>
    </location>
</feature>
<feature type="region of interest" description="Disordered" evidence="2">
    <location>
        <begin position="13"/>
        <end position="78"/>
    </location>
</feature>
<feature type="compositionally biased region" description="Acidic residues" evidence="2">
    <location>
        <begin position="22"/>
        <end position="31"/>
    </location>
</feature>
<feature type="compositionally biased region" description="Basic and acidic residues" evidence="2">
    <location>
        <begin position="47"/>
        <end position="60"/>
    </location>
</feature>
<feature type="compositionally biased region" description="Polar residues" evidence="2">
    <location>
        <begin position="64"/>
        <end position="78"/>
    </location>
</feature>
<reference key="1">
    <citation type="journal article" date="2011" name="MBio">
        <title>Novel metabolic attributes of the genus Cyanothece, comprising a group of unicellular nitrogen-fixing Cyanobacteria.</title>
        <authorList>
            <person name="Bandyopadhyay A."/>
            <person name="Elvitigala T."/>
            <person name="Welsh E."/>
            <person name="Stockel J."/>
            <person name="Liberton M."/>
            <person name="Min H."/>
            <person name="Sherman L.A."/>
            <person name="Pakrasi H.B."/>
        </authorList>
    </citation>
    <scope>NUCLEOTIDE SEQUENCE [LARGE SCALE GENOMIC DNA]</scope>
    <source>
        <strain>PCC 7425 / ATCC 29141</strain>
    </source>
</reference>
<evidence type="ECO:0000255" key="1">
    <source>
        <dbReference type="HAMAP-Rule" id="MF_01197"/>
    </source>
</evidence>
<evidence type="ECO:0000256" key="2">
    <source>
        <dbReference type="SAM" id="MobiDB-lite"/>
    </source>
</evidence>
<dbReference type="EMBL" id="CP001344">
    <property type="protein sequence ID" value="ACL43841.1"/>
    <property type="molecule type" value="Genomic_DNA"/>
</dbReference>
<dbReference type="SMR" id="B8HPI0"/>
<dbReference type="STRING" id="395961.Cyan7425_1471"/>
<dbReference type="KEGG" id="cyn:Cyan7425_1471"/>
<dbReference type="eggNOG" id="COG1799">
    <property type="taxonomic scope" value="Bacteria"/>
</dbReference>
<dbReference type="HOGENOM" id="CLU_078499_1_1_3"/>
<dbReference type="OrthoDB" id="9815206at2"/>
<dbReference type="GO" id="GO:0005737">
    <property type="term" value="C:cytoplasm"/>
    <property type="evidence" value="ECO:0007669"/>
    <property type="project" value="UniProtKB-SubCell"/>
</dbReference>
<dbReference type="GO" id="GO:0000917">
    <property type="term" value="P:division septum assembly"/>
    <property type="evidence" value="ECO:0007669"/>
    <property type="project" value="UniProtKB-KW"/>
</dbReference>
<dbReference type="GO" id="GO:0043093">
    <property type="term" value="P:FtsZ-dependent cytokinesis"/>
    <property type="evidence" value="ECO:0007669"/>
    <property type="project" value="UniProtKB-UniRule"/>
</dbReference>
<dbReference type="Gene3D" id="3.30.110.150">
    <property type="entry name" value="SepF-like protein"/>
    <property type="match status" value="1"/>
</dbReference>
<dbReference type="HAMAP" id="MF_01197">
    <property type="entry name" value="SepF"/>
    <property type="match status" value="1"/>
</dbReference>
<dbReference type="InterPro" id="IPR023052">
    <property type="entry name" value="Cell_div_SepF"/>
</dbReference>
<dbReference type="InterPro" id="IPR007561">
    <property type="entry name" value="Cell_div_SepF/SepF-rel"/>
</dbReference>
<dbReference type="InterPro" id="IPR038594">
    <property type="entry name" value="SepF-like_sf"/>
</dbReference>
<dbReference type="PANTHER" id="PTHR35798">
    <property type="entry name" value="CELL DIVISION PROTEIN SEPF"/>
    <property type="match status" value="1"/>
</dbReference>
<dbReference type="PANTHER" id="PTHR35798:SF1">
    <property type="entry name" value="CELL DIVISION PROTEIN SEPF"/>
    <property type="match status" value="1"/>
</dbReference>
<dbReference type="Pfam" id="PF04472">
    <property type="entry name" value="SepF"/>
    <property type="match status" value="1"/>
</dbReference>
<organism>
    <name type="scientific">Cyanothece sp. (strain PCC 7425 / ATCC 29141)</name>
    <dbReference type="NCBI Taxonomy" id="395961"/>
    <lineage>
        <taxon>Bacteria</taxon>
        <taxon>Bacillati</taxon>
        <taxon>Cyanobacteriota</taxon>
        <taxon>Cyanophyceae</taxon>
        <taxon>Gomontiellales</taxon>
        <taxon>Cyanothecaceae</taxon>
        <taxon>Cyanothece</taxon>
    </lineage>
</organism>